<evidence type="ECO:0000269" key="1">
    <source>
    </source>
</evidence>
<evidence type="ECO:0000305" key="2"/>
<reference key="1">
    <citation type="journal article" date="1989" name="J. Mol. Biol.">
        <title>Structure and function of the nun gene and the immunity region of the lambdoid phage HK022.</title>
        <authorList>
            <person name="Oberto J."/>
            <person name="Weisberg R.A."/>
            <person name="Gottesman M.E."/>
        </authorList>
    </citation>
    <scope>NUCLEOTIDE SEQUENCE [GENOMIC DNA]</scope>
</reference>
<reference key="2">
    <citation type="journal article" date="1991" name="Proc. Natl. Acad. Sci. U.S.A.">
        <title>The activity of the CIII regulator of lambdoid bacteriophages resides within a 24-amino acid protein domain.</title>
        <authorList>
            <person name="Kornitzer D."/>
            <person name="Altuvia S."/>
            <person name="Oppenheim A.B."/>
        </authorList>
    </citation>
    <scope>MUTAGENESIS</scope>
</reference>
<dbReference type="EMBL" id="X16093">
    <property type="protein sequence ID" value="CAA34220.1"/>
    <property type="molecule type" value="Genomic_DNA"/>
</dbReference>
<dbReference type="PIR" id="S06538">
    <property type="entry name" value="QCBPHK"/>
</dbReference>
<dbReference type="InterPro" id="IPR012995">
    <property type="entry name" value="CIII_regul"/>
</dbReference>
<dbReference type="InterPro" id="IPR013056">
    <property type="entry name" value="Phage_lambda_CIII"/>
</dbReference>
<dbReference type="Pfam" id="PF08134">
    <property type="entry name" value="cIII"/>
    <property type="match status" value="1"/>
</dbReference>
<dbReference type="PROSITE" id="PS00553">
    <property type="entry name" value="LAMBDA_PHAGE_CIII"/>
    <property type="match status" value="1"/>
</dbReference>
<feature type="chain" id="PRO_0000077594" description="Regulatory protein CIII">
    <location>
        <begin position="1"/>
        <end position="44"/>
    </location>
</feature>
<feature type="mutagenesis site" description="Low CIII activity." evidence="1">
    <original>S</original>
    <variation>F</variation>
    <location>
        <position position="20"/>
    </location>
</feature>
<feature type="mutagenesis site" description="Low CIII activity." evidence="1">
    <original>E</original>
    <variation>K</variation>
    <location>
        <position position="21"/>
    </location>
</feature>
<feature type="mutagenesis site" description="Low CIII activity." evidence="1">
    <original>R</original>
    <variation>H</variation>
    <location>
        <position position="24"/>
    </location>
</feature>
<organismHost>
    <name type="scientific">Escherichia coli</name>
    <dbReference type="NCBI Taxonomy" id="562"/>
</organismHost>
<protein>
    <recommendedName>
        <fullName>Regulatory protein CIII</fullName>
    </recommendedName>
</protein>
<gene>
    <name type="primary">CIII</name>
</gene>
<comment type="function">
    <text>Presence of the CIII protein in the cell results in the stabilization of the CII transcriptional activator (a very unstable protein), CII activates CI, the gene for repressor, and thus promotes the establishment of lysogeny.</text>
</comment>
<comment type="similarity">
    <text evidence="2">Belongs to the lambda phage CIII protein family.</text>
</comment>
<organism>
    <name type="scientific">Escherichia phage HK022</name>
    <name type="common">Bacteriophage HK022</name>
    <dbReference type="NCBI Taxonomy" id="10742"/>
    <lineage>
        <taxon>Viruses</taxon>
        <taxon>Duplodnaviria</taxon>
        <taxon>Heunggongvirae</taxon>
        <taxon>Uroviricota</taxon>
        <taxon>Caudoviricetes</taxon>
        <taxon>Hendrixvirinae</taxon>
        <taxon>Shamshuipovirus</taxon>
    </lineage>
</organism>
<accession>P18681</accession>
<proteinExistence type="evidence at protein level"/>
<sequence length="44" mass="4994">MMHFQLAGSGVMSAFYPHESELSRRVKQLIRAAKKQLEALCAMK</sequence>
<keyword id="KW-0010">Activator</keyword>
<keyword id="KW-0804">Transcription</keyword>
<keyword id="KW-0805">Transcription regulation</keyword>
<name>RPC3_BPHK0</name>